<accession>C0ZKC5</accession>
<gene>
    <name evidence="1" type="primary">purQ</name>
    <name type="ordered locus">BBR47_05990</name>
</gene>
<dbReference type="EC" id="6.3.5.3" evidence="1"/>
<dbReference type="EC" id="3.5.1.2" evidence="1"/>
<dbReference type="EMBL" id="AP008955">
    <property type="protein sequence ID" value="BAH41576.1"/>
    <property type="molecule type" value="Genomic_DNA"/>
</dbReference>
<dbReference type="RefSeq" id="WP_012684342.1">
    <property type="nucleotide sequence ID" value="NC_012491.1"/>
</dbReference>
<dbReference type="SMR" id="C0ZKC5"/>
<dbReference type="STRING" id="358681.BBR47_05990"/>
<dbReference type="KEGG" id="bbe:BBR47_05990"/>
<dbReference type="eggNOG" id="COG0047">
    <property type="taxonomic scope" value="Bacteria"/>
</dbReference>
<dbReference type="HOGENOM" id="CLU_001031_3_1_9"/>
<dbReference type="UniPathway" id="UPA00074">
    <property type="reaction ID" value="UER00128"/>
</dbReference>
<dbReference type="Proteomes" id="UP000001877">
    <property type="component" value="Chromosome"/>
</dbReference>
<dbReference type="GO" id="GO:0005737">
    <property type="term" value="C:cytoplasm"/>
    <property type="evidence" value="ECO:0007669"/>
    <property type="project" value="UniProtKB-SubCell"/>
</dbReference>
<dbReference type="GO" id="GO:0005524">
    <property type="term" value="F:ATP binding"/>
    <property type="evidence" value="ECO:0007669"/>
    <property type="project" value="UniProtKB-KW"/>
</dbReference>
<dbReference type="GO" id="GO:0004359">
    <property type="term" value="F:glutaminase activity"/>
    <property type="evidence" value="ECO:0007669"/>
    <property type="project" value="UniProtKB-EC"/>
</dbReference>
<dbReference type="GO" id="GO:0004642">
    <property type="term" value="F:phosphoribosylformylglycinamidine synthase activity"/>
    <property type="evidence" value="ECO:0007669"/>
    <property type="project" value="UniProtKB-UniRule"/>
</dbReference>
<dbReference type="GO" id="GO:0006189">
    <property type="term" value="P:'de novo' IMP biosynthetic process"/>
    <property type="evidence" value="ECO:0007669"/>
    <property type="project" value="UniProtKB-UniRule"/>
</dbReference>
<dbReference type="CDD" id="cd01740">
    <property type="entry name" value="GATase1_FGAR_AT"/>
    <property type="match status" value="1"/>
</dbReference>
<dbReference type="FunFam" id="3.40.50.880:FF:000019">
    <property type="entry name" value="Phosphoribosylformylglycinamidine synthase subunit PurQ"/>
    <property type="match status" value="1"/>
</dbReference>
<dbReference type="Gene3D" id="3.40.50.880">
    <property type="match status" value="1"/>
</dbReference>
<dbReference type="HAMAP" id="MF_00421">
    <property type="entry name" value="PurQ"/>
    <property type="match status" value="1"/>
</dbReference>
<dbReference type="InterPro" id="IPR029062">
    <property type="entry name" value="Class_I_gatase-like"/>
</dbReference>
<dbReference type="InterPro" id="IPR010075">
    <property type="entry name" value="PRibForGlyAmidine_synth_PurQ"/>
</dbReference>
<dbReference type="NCBIfam" id="TIGR01737">
    <property type="entry name" value="FGAM_synth_I"/>
    <property type="match status" value="1"/>
</dbReference>
<dbReference type="NCBIfam" id="NF002957">
    <property type="entry name" value="PRK03619.1"/>
    <property type="match status" value="1"/>
</dbReference>
<dbReference type="PANTHER" id="PTHR47552">
    <property type="entry name" value="PHOSPHORIBOSYLFORMYLGLYCINAMIDINE SYNTHASE SUBUNIT PURQ"/>
    <property type="match status" value="1"/>
</dbReference>
<dbReference type="PANTHER" id="PTHR47552:SF1">
    <property type="entry name" value="PHOSPHORIBOSYLFORMYLGLYCINAMIDINE SYNTHASE SUBUNIT PURQ"/>
    <property type="match status" value="1"/>
</dbReference>
<dbReference type="Pfam" id="PF13507">
    <property type="entry name" value="GATase_5"/>
    <property type="match status" value="1"/>
</dbReference>
<dbReference type="PIRSF" id="PIRSF001586">
    <property type="entry name" value="FGAM_synth_I"/>
    <property type="match status" value="1"/>
</dbReference>
<dbReference type="SMART" id="SM01211">
    <property type="entry name" value="GATase_5"/>
    <property type="match status" value="1"/>
</dbReference>
<dbReference type="SUPFAM" id="SSF52317">
    <property type="entry name" value="Class I glutamine amidotransferase-like"/>
    <property type="match status" value="1"/>
</dbReference>
<dbReference type="PROSITE" id="PS51273">
    <property type="entry name" value="GATASE_TYPE_1"/>
    <property type="match status" value="1"/>
</dbReference>
<reference key="1">
    <citation type="submission" date="2005-03" db="EMBL/GenBank/DDBJ databases">
        <title>Brevibacillus brevis strain 47, complete genome.</title>
        <authorList>
            <person name="Hosoyama A."/>
            <person name="Yamada R."/>
            <person name="Hongo Y."/>
            <person name="Terui Y."/>
            <person name="Ankai A."/>
            <person name="Masuyama W."/>
            <person name="Sekiguchi M."/>
            <person name="Takeda T."/>
            <person name="Asano K."/>
            <person name="Ohji S."/>
            <person name="Ichikawa N."/>
            <person name="Narita S."/>
            <person name="Aoki N."/>
            <person name="Miura H."/>
            <person name="Matsushita S."/>
            <person name="Sekigawa T."/>
            <person name="Yamagata H."/>
            <person name="Yoshikawa H."/>
            <person name="Udaka S."/>
            <person name="Tanikawa S."/>
            <person name="Fujita N."/>
        </authorList>
    </citation>
    <scope>NUCLEOTIDE SEQUENCE [LARGE SCALE GENOMIC DNA]</scope>
    <source>
        <strain>47 / JCM 6285 / NBRC 100599</strain>
    </source>
</reference>
<protein>
    <recommendedName>
        <fullName evidence="1">Phosphoribosylformylglycinamidine synthase subunit PurQ</fullName>
        <shortName evidence="1">FGAM synthase</shortName>
        <ecNumber evidence="1">6.3.5.3</ecNumber>
    </recommendedName>
    <alternativeName>
        <fullName evidence="1">Formylglycinamide ribonucleotide amidotransferase subunit I</fullName>
        <shortName evidence="1">FGAR amidotransferase I</shortName>
        <shortName evidence="1">FGAR-AT I</shortName>
    </alternativeName>
    <alternativeName>
        <fullName evidence="1">Glutaminase PurQ</fullName>
        <ecNumber evidence="1">3.5.1.2</ecNumber>
    </alternativeName>
    <alternativeName>
        <fullName evidence="1">Phosphoribosylformylglycinamidine synthase subunit I</fullName>
    </alternativeName>
</protein>
<comment type="function">
    <text evidence="1">Part of the phosphoribosylformylglycinamidine synthase complex involved in the purines biosynthetic pathway. Catalyzes the ATP-dependent conversion of formylglycinamide ribonucleotide (FGAR) and glutamine to yield formylglycinamidine ribonucleotide (FGAM) and glutamate. The FGAM synthase complex is composed of three subunits. PurQ produces an ammonia molecule by converting glutamine to glutamate. PurL transfers the ammonia molecule to FGAR to form FGAM in an ATP-dependent manner. PurS interacts with PurQ and PurL and is thought to assist in the transfer of the ammonia molecule from PurQ to PurL.</text>
</comment>
<comment type="catalytic activity">
    <reaction evidence="1">
        <text>N(2)-formyl-N(1)-(5-phospho-beta-D-ribosyl)glycinamide + L-glutamine + ATP + H2O = 2-formamido-N(1)-(5-O-phospho-beta-D-ribosyl)acetamidine + L-glutamate + ADP + phosphate + H(+)</text>
        <dbReference type="Rhea" id="RHEA:17129"/>
        <dbReference type="ChEBI" id="CHEBI:15377"/>
        <dbReference type="ChEBI" id="CHEBI:15378"/>
        <dbReference type="ChEBI" id="CHEBI:29985"/>
        <dbReference type="ChEBI" id="CHEBI:30616"/>
        <dbReference type="ChEBI" id="CHEBI:43474"/>
        <dbReference type="ChEBI" id="CHEBI:58359"/>
        <dbReference type="ChEBI" id="CHEBI:147286"/>
        <dbReference type="ChEBI" id="CHEBI:147287"/>
        <dbReference type="ChEBI" id="CHEBI:456216"/>
        <dbReference type="EC" id="6.3.5.3"/>
    </reaction>
</comment>
<comment type="catalytic activity">
    <reaction evidence="1">
        <text>L-glutamine + H2O = L-glutamate + NH4(+)</text>
        <dbReference type="Rhea" id="RHEA:15889"/>
        <dbReference type="ChEBI" id="CHEBI:15377"/>
        <dbReference type="ChEBI" id="CHEBI:28938"/>
        <dbReference type="ChEBI" id="CHEBI:29985"/>
        <dbReference type="ChEBI" id="CHEBI:58359"/>
        <dbReference type="EC" id="3.5.1.2"/>
    </reaction>
</comment>
<comment type="pathway">
    <text evidence="1">Purine metabolism; IMP biosynthesis via de novo pathway; 5-amino-1-(5-phospho-D-ribosyl)imidazole from N(2)-formyl-N(1)-(5-phospho-D-ribosyl)glycinamide: step 1/2.</text>
</comment>
<comment type="subunit">
    <text evidence="1">Part of the FGAM synthase complex composed of 1 PurL, 1 PurQ and 2 PurS subunits.</text>
</comment>
<comment type="subcellular location">
    <subcellularLocation>
        <location evidence="1">Cytoplasm</location>
    </subcellularLocation>
</comment>
<sequence length="230" mass="25563">MRVAVIVFPGSNADVDLFNAVEDVMGVPVDYVWHSDTDLSKYDAILLPGGFSYGDYLRCGAVARFSPVMEQVVKAADEGKLIMGICNGFQILTEVGLLPGALLRNRSLKFRCKLSELRVENNDTSFTRDFAAGEVIQIPIAHGEGNYYCDEETLAKLKANKQIVFRYHGENPNGSLEDIAGICNERGNVLGMMPHPERAVHSWMTSDDGRRMFTSILKTWREQNSVTTHA</sequence>
<feature type="chain" id="PRO_1000134914" description="Phosphoribosylformylglycinamidine synthase subunit PurQ">
    <location>
        <begin position="1"/>
        <end position="230"/>
    </location>
</feature>
<feature type="domain" description="Glutamine amidotransferase type-1" evidence="1">
    <location>
        <begin position="2"/>
        <end position="226"/>
    </location>
</feature>
<feature type="active site" description="Nucleophile" evidence="1">
    <location>
        <position position="86"/>
    </location>
</feature>
<feature type="active site" evidence="1">
    <location>
        <position position="195"/>
    </location>
</feature>
<feature type="active site" evidence="1">
    <location>
        <position position="197"/>
    </location>
</feature>
<evidence type="ECO:0000255" key="1">
    <source>
        <dbReference type="HAMAP-Rule" id="MF_00421"/>
    </source>
</evidence>
<keyword id="KW-0067">ATP-binding</keyword>
<keyword id="KW-0963">Cytoplasm</keyword>
<keyword id="KW-0315">Glutamine amidotransferase</keyword>
<keyword id="KW-0378">Hydrolase</keyword>
<keyword id="KW-0436">Ligase</keyword>
<keyword id="KW-0547">Nucleotide-binding</keyword>
<keyword id="KW-0658">Purine biosynthesis</keyword>
<keyword id="KW-1185">Reference proteome</keyword>
<name>PURQ_BREBN</name>
<organism>
    <name type="scientific">Brevibacillus brevis (strain 47 / JCM 6285 / NBRC 100599)</name>
    <dbReference type="NCBI Taxonomy" id="358681"/>
    <lineage>
        <taxon>Bacteria</taxon>
        <taxon>Bacillati</taxon>
        <taxon>Bacillota</taxon>
        <taxon>Bacilli</taxon>
        <taxon>Bacillales</taxon>
        <taxon>Paenibacillaceae</taxon>
        <taxon>Brevibacillus</taxon>
    </lineage>
</organism>
<proteinExistence type="inferred from homology"/>